<feature type="chain" id="PRO_0000159624" description="Archaemetzincin">
    <location>
        <begin position="1"/>
        <end position="173"/>
    </location>
</feature>
<feature type="active site" description="Proton acceptor" evidence="1">
    <location>
        <position position="131"/>
    </location>
</feature>
<feature type="binding site" evidence="1">
    <location>
        <position position="130"/>
    </location>
    <ligand>
        <name>Zn(2+)</name>
        <dbReference type="ChEBI" id="CHEBI:29105"/>
        <label>1</label>
        <note>catalytic</note>
    </ligand>
</feature>
<feature type="binding site" evidence="1">
    <location>
        <position position="134"/>
    </location>
    <ligand>
        <name>Zn(2+)</name>
        <dbReference type="ChEBI" id="CHEBI:29105"/>
        <label>1</label>
        <note>catalytic</note>
    </ligand>
</feature>
<feature type="binding site" evidence="1">
    <location>
        <position position="140"/>
    </location>
    <ligand>
        <name>Zn(2+)</name>
        <dbReference type="ChEBI" id="CHEBI:29105"/>
        <label>1</label>
        <note>catalytic</note>
    </ligand>
</feature>
<feature type="binding site" evidence="1">
    <location>
        <position position="141"/>
    </location>
    <ligand>
        <name>Zn(2+)</name>
        <dbReference type="ChEBI" id="CHEBI:29105"/>
        <label>2</label>
    </ligand>
</feature>
<feature type="binding site" evidence="1">
    <location>
        <position position="146"/>
    </location>
    <ligand>
        <name>Zn(2+)</name>
        <dbReference type="ChEBI" id="CHEBI:29105"/>
        <label>2</label>
    </ligand>
</feature>
<feature type="binding site" evidence="1">
    <location>
        <position position="165"/>
    </location>
    <ligand>
        <name>Zn(2+)</name>
        <dbReference type="ChEBI" id="CHEBI:29105"/>
        <label>2</label>
    </ligand>
</feature>
<feature type="binding site" evidence="1">
    <location>
        <position position="168"/>
    </location>
    <ligand>
        <name>Zn(2+)</name>
        <dbReference type="ChEBI" id="CHEBI:29105"/>
        <label>2</label>
    </ligand>
</feature>
<comment type="function">
    <text evidence="1">Probable zinc metalloprotease whose natural substrate is unknown.</text>
</comment>
<comment type="cofactor">
    <cofactor evidence="1">
        <name>Zn(2+)</name>
        <dbReference type="ChEBI" id="CHEBI:29105"/>
    </cofactor>
    <text evidence="1">Binds 2 Zn(2+) ions per subunit. One is catalytic, whereas the other seems to have a structural role.</text>
</comment>
<comment type="subunit">
    <text evidence="1">Monomer.</text>
</comment>
<comment type="similarity">
    <text evidence="1">Belongs to the peptidase M54 family.</text>
</comment>
<comment type="sequence caution" evidence="2">
    <conflict type="erroneous initiation">
        <sequence resource="EMBL-CDS" id="AAV46957"/>
    </conflict>
</comment>
<organism>
    <name type="scientific">Haloarcula marismortui (strain ATCC 43049 / DSM 3752 / JCM 8966 / VKM B-1809)</name>
    <name type="common">Halobacterium marismortui</name>
    <dbReference type="NCBI Taxonomy" id="272569"/>
    <lineage>
        <taxon>Archaea</taxon>
        <taxon>Methanobacteriati</taxon>
        <taxon>Methanobacteriota</taxon>
        <taxon>Stenosarchaea group</taxon>
        <taxon>Halobacteria</taxon>
        <taxon>Halobacteriales</taxon>
        <taxon>Haloarculaceae</taxon>
        <taxon>Haloarcula</taxon>
    </lineage>
</organism>
<protein>
    <recommendedName>
        <fullName evidence="1">Archaemetzincin</fullName>
        <ecNumber evidence="1">3.4.-.-</ecNumber>
    </recommendedName>
</protein>
<proteinExistence type="inferred from homology"/>
<sequence length="173" mass="19162">MHVDIVPVGEVSAQVKREASDGLRSVYDCEVSMHEPQSIPAGAYDGDRDQYRAEEFIDLARRVGSGGKNIAITPKDLFYRRRNYVFGLAYLGGSGSVISTYRLQTSSDGGFSNRSAGEIFSQRVRKEVVHEVGHTLGLEHCDNKRCVMNFSPTVRQVDVKEVSLCGSCQRNVL</sequence>
<gene>
    <name evidence="1" type="primary">amzA</name>
    <name type="ordered locus">rrnAC2105</name>
</gene>
<dbReference type="EC" id="3.4.-.-" evidence="1"/>
<dbReference type="EMBL" id="AY596297">
    <property type="protein sequence ID" value="AAV46957.1"/>
    <property type="status" value="ALT_INIT"/>
    <property type="molecule type" value="Genomic_DNA"/>
</dbReference>
<dbReference type="RefSeq" id="WP_004514915.1">
    <property type="nucleotide sequence ID" value="NZ_CP039138.1"/>
</dbReference>
<dbReference type="SMR" id="Q5V0J7"/>
<dbReference type="STRING" id="272569.rrnAC2105"/>
<dbReference type="PaxDb" id="272569-rrnAC2105"/>
<dbReference type="EnsemblBacteria" id="AAV46957">
    <property type="protein sequence ID" value="AAV46957"/>
    <property type="gene ID" value="rrnAC2105"/>
</dbReference>
<dbReference type="KEGG" id="hma:rrnAC2105"/>
<dbReference type="PATRIC" id="fig|272569.17.peg.2752"/>
<dbReference type="eggNOG" id="arCOG00458">
    <property type="taxonomic scope" value="Archaea"/>
</dbReference>
<dbReference type="HOGENOM" id="CLU_822848_0_0_2"/>
<dbReference type="Proteomes" id="UP000001169">
    <property type="component" value="Chromosome I"/>
</dbReference>
<dbReference type="GO" id="GO:0008237">
    <property type="term" value="F:metallopeptidase activity"/>
    <property type="evidence" value="ECO:0007669"/>
    <property type="project" value="UniProtKB-UniRule"/>
</dbReference>
<dbReference type="GO" id="GO:0008270">
    <property type="term" value="F:zinc ion binding"/>
    <property type="evidence" value="ECO:0007669"/>
    <property type="project" value="UniProtKB-UniRule"/>
</dbReference>
<dbReference type="GO" id="GO:0006508">
    <property type="term" value="P:proteolysis"/>
    <property type="evidence" value="ECO:0007669"/>
    <property type="project" value="UniProtKB-UniRule"/>
</dbReference>
<dbReference type="CDD" id="cd11375">
    <property type="entry name" value="Peptidase_M54"/>
    <property type="match status" value="1"/>
</dbReference>
<dbReference type="Gene3D" id="3.40.390.10">
    <property type="entry name" value="Collagenase (Catalytic Domain)"/>
    <property type="match status" value="1"/>
</dbReference>
<dbReference type="HAMAP" id="MF_01842">
    <property type="entry name" value="Archaemetzincin"/>
    <property type="match status" value="1"/>
</dbReference>
<dbReference type="InterPro" id="IPR024079">
    <property type="entry name" value="MetalloPept_cat_dom_sf"/>
</dbReference>
<dbReference type="InterPro" id="IPR012962">
    <property type="entry name" value="Pept_M54_archaemetzincn"/>
</dbReference>
<dbReference type="InterPro" id="IPR012091">
    <property type="entry name" value="Pept_M54_archaemetzncn_arc/bac"/>
</dbReference>
<dbReference type="NCBIfam" id="NF033823">
    <property type="entry name" value="archmetzin"/>
    <property type="match status" value="1"/>
</dbReference>
<dbReference type="PANTHER" id="PTHR15910">
    <property type="entry name" value="ARCHAEMETZINCIN"/>
    <property type="match status" value="1"/>
</dbReference>
<dbReference type="PANTHER" id="PTHR15910:SF1">
    <property type="entry name" value="ARCHAEMETZINCIN-2"/>
    <property type="match status" value="1"/>
</dbReference>
<dbReference type="Pfam" id="PF07998">
    <property type="entry name" value="Peptidase_M54"/>
    <property type="match status" value="1"/>
</dbReference>
<dbReference type="PIRSF" id="PIRSF005785">
    <property type="entry name" value="Zn-prot_arch"/>
    <property type="match status" value="1"/>
</dbReference>
<dbReference type="SUPFAM" id="SSF55486">
    <property type="entry name" value="Metalloproteases ('zincins'), catalytic domain"/>
    <property type="match status" value="1"/>
</dbReference>
<keyword id="KW-0378">Hydrolase</keyword>
<keyword id="KW-0479">Metal-binding</keyword>
<keyword id="KW-0482">Metalloprotease</keyword>
<keyword id="KW-0645">Protease</keyword>
<keyword id="KW-1185">Reference proteome</keyword>
<keyword id="KW-0862">Zinc</keyword>
<name>AMZA_HALMA</name>
<evidence type="ECO:0000255" key="1">
    <source>
        <dbReference type="HAMAP-Rule" id="MF_01842"/>
    </source>
</evidence>
<evidence type="ECO:0000305" key="2"/>
<reference key="1">
    <citation type="journal article" date="2004" name="Genome Res.">
        <title>Genome sequence of Haloarcula marismortui: a halophilic archaeon from the Dead Sea.</title>
        <authorList>
            <person name="Baliga N.S."/>
            <person name="Bonneau R."/>
            <person name="Facciotti M.T."/>
            <person name="Pan M."/>
            <person name="Glusman G."/>
            <person name="Deutsch E.W."/>
            <person name="Shannon P."/>
            <person name="Chiu Y."/>
            <person name="Weng R.S."/>
            <person name="Gan R.R."/>
            <person name="Hung P."/>
            <person name="Date S.V."/>
            <person name="Marcotte E."/>
            <person name="Hood L."/>
            <person name="Ng W.V."/>
        </authorList>
    </citation>
    <scope>NUCLEOTIDE SEQUENCE [LARGE SCALE GENOMIC DNA]</scope>
    <source>
        <strain>ATCC 43049 / DSM 3752 / JCM 8966 / VKM B-1809</strain>
    </source>
</reference>
<accession>Q5V0J7</accession>